<feature type="chain" id="PRO_0000189474" description="2-C-methyl-D-erythritol 2,4-cyclodiphosphate synthase">
    <location>
        <begin position="1"/>
        <end position="161"/>
    </location>
</feature>
<feature type="binding site" evidence="1">
    <location>
        <begin position="9"/>
        <end position="11"/>
    </location>
    <ligand>
        <name>4-CDP-2-C-methyl-D-erythritol 2-phosphate</name>
        <dbReference type="ChEBI" id="CHEBI:57919"/>
    </ligand>
</feature>
<feature type="binding site" evidence="1">
    <location>
        <position position="9"/>
    </location>
    <ligand>
        <name>a divalent metal cation</name>
        <dbReference type="ChEBI" id="CHEBI:60240"/>
    </ligand>
</feature>
<feature type="binding site" evidence="1">
    <location>
        <position position="11"/>
    </location>
    <ligand>
        <name>a divalent metal cation</name>
        <dbReference type="ChEBI" id="CHEBI:60240"/>
    </ligand>
</feature>
<feature type="binding site" evidence="1">
    <location>
        <begin position="37"/>
        <end position="38"/>
    </location>
    <ligand>
        <name>4-CDP-2-C-methyl-D-erythritol 2-phosphate</name>
        <dbReference type="ChEBI" id="CHEBI:57919"/>
    </ligand>
</feature>
<feature type="binding site" evidence="1">
    <location>
        <position position="45"/>
    </location>
    <ligand>
        <name>a divalent metal cation</name>
        <dbReference type="ChEBI" id="CHEBI:60240"/>
    </ligand>
</feature>
<feature type="binding site" evidence="1">
    <location>
        <begin position="59"/>
        <end position="61"/>
    </location>
    <ligand>
        <name>4-CDP-2-C-methyl-D-erythritol 2-phosphate</name>
        <dbReference type="ChEBI" id="CHEBI:57919"/>
    </ligand>
</feature>
<feature type="binding site" evidence="1">
    <location>
        <begin position="64"/>
        <end position="68"/>
    </location>
    <ligand>
        <name>4-CDP-2-C-methyl-D-erythritol 2-phosphate</name>
        <dbReference type="ChEBI" id="CHEBI:57919"/>
    </ligand>
</feature>
<feature type="binding site" evidence="1">
    <location>
        <begin position="135"/>
        <end position="138"/>
    </location>
    <ligand>
        <name>4-CDP-2-C-methyl-D-erythritol 2-phosphate</name>
        <dbReference type="ChEBI" id="CHEBI:57919"/>
    </ligand>
</feature>
<feature type="binding site" evidence="1">
    <location>
        <position position="145"/>
    </location>
    <ligand>
        <name>4-CDP-2-C-methyl-D-erythritol 2-phosphate</name>
        <dbReference type="ChEBI" id="CHEBI:57919"/>
    </ligand>
</feature>
<feature type="site" description="Transition state stabilizer" evidence="1">
    <location>
        <position position="37"/>
    </location>
</feature>
<feature type="site" description="Transition state stabilizer" evidence="1">
    <location>
        <position position="136"/>
    </location>
</feature>
<proteinExistence type="inferred from homology"/>
<protein>
    <recommendedName>
        <fullName evidence="1">2-C-methyl-D-erythritol 2,4-cyclodiphosphate synthase</fullName>
        <shortName evidence="1">MECDP-synthase</shortName>
        <shortName evidence="1">MECPP-synthase</shortName>
        <shortName evidence="1">MECPS</shortName>
        <ecNumber evidence="1">4.6.1.12</ecNumber>
    </recommendedName>
</protein>
<comment type="function">
    <text evidence="1">Involved in the biosynthesis of isopentenyl diphosphate (IPP) and dimethylallyl diphosphate (DMAPP), two major building blocks of isoprenoid compounds. Catalyzes the conversion of 4-diphosphocytidyl-2-C-methyl-D-erythritol 2-phosphate (CDP-ME2P) to 2-C-methyl-D-erythritol 2,4-cyclodiphosphate (ME-CPP) with a corresponding release of cytidine 5-monophosphate (CMP).</text>
</comment>
<comment type="catalytic activity">
    <reaction evidence="1">
        <text>4-CDP-2-C-methyl-D-erythritol 2-phosphate = 2-C-methyl-D-erythritol 2,4-cyclic diphosphate + CMP</text>
        <dbReference type="Rhea" id="RHEA:23864"/>
        <dbReference type="ChEBI" id="CHEBI:57919"/>
        <dbReference type="ChEBI" id="CHEBI:58483"/>
        <dbReference type="ChEBI" id="CHEBI:60377"/>
        <dbReference type="EC" id="4.6.1.12"/>
    </reaction>
</comment>
<comment type="cofactor">
    <cofactor evidence="1">
        <name>a divalent metal cation</name>
        <dbReference type="ChEBI" id="CHEBI:60240"/>
    </cofactor>
    <text evidence="1">Binds 1 divalent metal cation per subunit.</text>
</comment>
<comment type="pathway">
    <text evidence="1">Isoprenoid biosynthesis; isopentenyl diphosphate biosynthesis via DXP pathway; isopentenyl diphosphate from 1-deoxy-D-xylulose 5-phosphate: step 4/6.</text>
</comment>
<comment type="subunit">
    <text evidence="1">Homotrimer.</text>
</comment>
<comment type="similarity">
    <text evidence="1">Belongs to the IspF family.</text>
</comment>
<keyword id="KW-0414">Isoprene biosynthesis</keyword>
<keyword id="KW-0456">Lyase</keyword>
<keyword id="KW-0479">Metal-binding</keyword>
<gene>
    <name evidence="1" type="primary">ispF</name>
    <name type="ordered locus">LIC_10610</name>
</gene>
<evidence type="ECO:0000255" key="1">
    <source>
        <dbReference type="HAMAP-Rule" id="MF_00107"/>
    </source>
</evidence>
<dbReference type="EC" id="4.6.1.12" evidence="1"/>
<dbReference type="EMBL" id="AE016823">
    <property type="protein sequence ID" value="AAS69231.1"/>
    <property type="molecule type" value="Genomic_DNA"/>
</dbReference>
<dbReference type="RefSeq" id="WP_000285623.1">
    <property type="nucleotide sequence ID" value="NC_005823.1"/>
</dbReference>
<dbReference type="SMR" id="Q72UP7"/>
<dbReference type="GeneID" id="61143955"/>
<dbReference type="KEGG" id="lic:LIC_10610"/>
<dbReference type="HOGENOM" id="CLU_084630_2_0_12"/>
<dbReference type="UniPathway" id="UPA00056">
    <property type="reaction ID" value="UER00095"/>
</dbReference>
<dbReference type="Proteomes" id="UP000007037">
    <property type="component" value="Chromosome I"/>
</dbReference>
<dbReference type="GO" id="GO:0008685">
    <property type="term" value="F:2-C-methyl-D-erythritol 2,4-cyclodiphosphate synthase activity"/>
    <property type="evidence" value="ECO:0007669"/>
    <property type="project" value="UniProtKB-UniRule"/>
</dbReference>
<dbReference type="GO" id="GO:0046872">
    <property type="term" value="F:metal ion binding"/>
    <property type="evidence" value="ECO:0007669"/>
    <property type="project" value="UniProtKB-KW"/>
</dbReference>
<dbReference type="GO" id="GO:0019288">
    <property type="term" value="P:isopentenyl diphosphate biosynthetic process, methylerythritol 4-phosphate pathway"/>
    <property type="evidence" value="ECO:0007669"/>
    <property type="project" value="UniProtKB-UniRule"/>
</dbReference>
<dbReference type="GO" id="GO:0016114">
    <property type="term" value="P:terpenoid biosynthetic process"/>
    <property type="evidence" value="ECO:0007669"/>
    <property type="project" value="InterPro"/>
</dbReference>
<dbReference type="CDD" id="cd00554">
    <property type="entry name" value="MECDP_synthase"/>
    <property type="match status" value="1"/>
</dbReference>
<dbReference type="FunFam" id="3.30.1330.50:FF:000007">
    <property type="entry name" value="2-C-methyl-D-erythritol 2,4-cyclodiphosphate synthase"/>
    <property type="match status" value="1"/>
</dbReference>
<dbReference type="Gene3D" id="3.30.1330.50">
    <property type="entry name" value="2-C-methyl-D-erythritol 2,4-cyclodiphosphate synthase"/>
    <property type="match status" value="1"/>
</dbReference>
<dbReference type="HAMAP" id="MF_00107">
    <property type="entry name" value="IspF"/>
    <property type="match status" value="1"/>
</dbReference>
<dbReference type="InterPro" id="IPR003526">
    <property type="entry name" value="MECDP_synthase"/>
</dbReference>
<dbReference type="InterPro" id="IPR020555">
    <property type="entry name" value="MECDP_synthase_CS"/>
</dbReference>
<dbReference type="InterPro" id="IPR036571">
    <property type="entry name" value="MECDP_synthase_sf"/>
</dbReference>
<dbReference type="NCBIfam" id="TIGR00151">
    <property type="entry name" value="ispF"/>
    <property type="match status" value="1"/>
</dbReference>
<dbReference type="PANTHER" id="PTHR43181">
    <property type="entry name" value="2-C-METHYL-D-ERYTHRITOL 2,4-CYCLODIPHOSPHATE SYNTHASE, CHLOROPLASTIC"/>
    <property type="match status" value="1"/>
</dbReference>
<dbReference type="PANTHER" id="PTHR43181:SF1">
    <property type="entry name" value="2-C-METHYL-D-ERYTHRITOL 2,4-CYCLODIPHOSPHATE SYNTHASE, CHLOROPLASTIC"/>
    <property type="match status" value="1"/>
</dbReference>
<dbReference type="Pfam" id="PF02542">
    <property type="entry name" value="YgbB"/>
    <property type="match status" value="1"/>
</dbReference>
<dbReference type="SUPFAM" id="SSF69765">
    <property type="entry name" value="IpsF-like"/>
    <property type="match status" value="1"/>
</dbReference>
<dbReference type="PROSITE" id="PS01350">
    <property type="entry name" value="ISPF"/>
    <property type="match status" value="1"/>
</dbReference>
<reference key="1">
    <citation type="journal article" date="2004" name="J. Bacteriol.">
        <title>Comparative genomics of two Leptospira interrogans serovars reveals novel insights into physiology and pathogenesis.</title>
        <authorList>
            <person name="Nascimento A.L.T.O."/>
            <person name="Ko A.I."/>
            <person name="Martins E.A.L."/>
            <person name="Monteiro-Vitorello C.B."/>
            <person name="Ho P.L."/>
            <person name="Haake D.A."/>
            <person name="Verjovski-Almeida S."/>
            <person name="Hartskeerl R.A."/>
            <person name="Marques M.V."/>
            <person name="Oliveira M.C."/>
            <person name="Menck C.F.M."/>
            <person name="Leite L.C.C."/>
            <person name="Carrer H."/>
            <person name="Coutinho L.L."/>
            <person name="Degrave W.M."/>
            <person name="Dellagostin O.A."/>
            <person name="El-Dorry H."/>
            <person name="Ferro E.S."/>
            <person name="Ferro M.I.T."/>
            <person name="Furlan L.R."/>
            <person name="Gamberini M."/>
            <person name="Giglioti E.A."/>
            <person name="Goes-Neto A."/>
            <person name="Goldman G.H."/>
            <person name="Goldman M.H.S."/>
            <person name="Harakava R."/>
            <person name="Jeronimo S.M.B."/>
            <person name="Junqueira-de-Azevedo I.L.M."/>
            <person name="Kimura E.T."/>
            <person name="Kuramae E.E."/>
            <person name="Lemos E.G.M."/>
            <person name="Lemos M.V.F."/>
            <person name="Marino C.L."/>
            <person name="Nunes L.R."/>
            <person name="de Oliveira R.C."/>
            <person name="Pereira G.G."/>
            <person name="Reis M.S."/>
            <person name="Schriefer A."/>
            <person name="Siqueira W.J."/>
            <person name="Sommer P."/>
            <person name="Tsai S.M."/>
            <person name="Simpson A.J.G."/>
            <person name="Ferro J.A."/>
            <person name="Camargo L.E.A."/>
            <person name="Kitajima J.P."/>
            <person name="Setubal J.C."/>
            <person name="Van Sluys M.A."/>
        </authorList>
    </citation>
    <scope>NUCLEOTIDE SEQUENCE [LARGE SCALE GENOMIC DNA]</scope>
    <source>
        <strain>Fiocruz L1-130</strain>
    </source>
</reference>
<sequence>MYRIGNGIDFHKLEINLNRPLILGGIECESEFALVGHSDADIILHAISDAILGALALGDIGQYFPDTDPSLKNIDSKIILVKCLELMKEKNFDLVNIDCTVIGERPKIAPLKDRITKSLSNLLNLPLDCISVKATTTEKMGALGRQEGIGTFCSILLEKRS</sequence>
<name>ISPF_LEPIC</name>
<accession>Q72UP7</accession>
<organism>
    <name type="scientific">Leptospira interrogans serogroup Icterohaemorrhagiae serovar copenhageni (strain Fiocruz L1-130)</name>
    <dbReference type="NCBI Taxonomy" id="267671"/>
    <lineage>
        <taxon>Bacteria</taxon>
        <taxon>Pseudomonadati</taxon>
        <taxon>Spirochaetota</taxon>
        <taxon>Spirochaetia</taxon>
        <taxon>Leptospirales</taxon>
        <taxon>Leptospiraceae</taxon>
        <taxon>Leptospira</taxon>
    </lineage>
</organism>